<proteinExistence type="inferred from homology"/>
<organism>
    <name type="scientific">Streptococcus uberis (strain ATCC BAA-854 / 0140J)</name>
    <dbReference type="NCBI Taxonomy" id="218495"/>
    <lineage>
        <taxon>Bacteria</taxon>
        <taxon>Bacillati</taxon>
        <taxon>Bacillota</taxon>
        <taxon>Bacilli</taxon>
        <taxon>Lactobacillales</taxon>
        <taxon>Streptococcaceae</taxon>
        <taxon>Streptococcus</taxon>
    </lineage>
</organism>
<reference key="1">
    <citation type="journal article" date="2009" name="BMC Genomics">
        <title>Evidence for niche adaptation in the genome of the bovine pathogen Streptococcus uberis.</title>
        <authorList>
            <person name="Ward P.N."/>
            <person name="Holden M.T.G."/>
            <person name="Leigh J.A."/>
            <person name="Lennard N."/>
            <person name="Bignell A."/>
            <person name="Barron A."/>
            <person name="Clark L."/>
            <person name="Quail M.A."/>
            <person name="Woodward J."/>
            <person name="Barrell B.G."/>
            <person name="Egan S.A."/>
            <person name="Field T.R."/>
            <person name="Maskell D."/>
            <person name="Kehoe M."/>
            <person name="Dowson C.G."/>
            <person name="Chanter N."/>
            <person name="Whatmore A.M."/>
            <person name="Bentley S.D."/>
            <person name="Parkhill J."/>
        </authorList>
    </citation>
    <scope>NUCLEOTIDE SEQUENCE [LARGE SCALE GENOMIC DNA]</scope>
    <source>
        <strain>ATCC BAA-854 / 0140J</strain>
    </source>
</reference>
<feature type="chain" id="PRO_1000196536" description="Small ribosomal subunit protein bS18">
    <location>
        <begin position="1"/>
        <end position="79"/>
    </location>
</feature>
<accession>B9DVK2</accession>
<evidence type="ECO:0000255" key="1">
    <source>
        <dbReference type="HAMAP-Rule" id="MF_00270"/>
    </source>
</evidence>
<evidence type="ECO:0000305" key="2"/>
<name>RS18_STRU0</name>
<gene>
    <name evidence="1" type="primary">rpsR</name>
    <name type="ordered locus">SUB1555</name>
</gene>
<sequence>MAQQRRGGFKRRKKVDFIAANKIEYVDYKDTELLSRFVSERGKILPRRVTGTSAKNQRKVTTAIKRARVMALMPYVNED</sequence>
<protein>
    <recommendedName>
        <fullName evidence="1">Small ribosomal subunit protein bS18</fullName>
    </recommendedName>
    <alternativeName>
        <fullName evidence="2">30S ribosomal protein S18</fullName>
    </alternativeName>
</protein>
<comment type="function">
    <text evidence="1">Binds as a heterodimer with protein bS6 to the central domain of the 16S rRNA, where it helps stabilize the platform of the 30S subunit.</text>
</comment>
<comment type="subunit">
    <text evidence="1">Part of the 30S ribosomal subunit. Forms a tight heterodimer with protein bS6.</text>
</comment>
<comment type="similarity">
    <text evidence="1">Belongs to the bacterial ribosomal protein bS18 family.</text>
</comment>
<keyword id="KW-1185">Reference proteome</keyword>
<keyword id="KW-0687">Ribonucleoprotein</keyword>
<keyword id="KW-0689">Ribosomal protein</keyword>
<keyword id="KW-0694">RNA-binding</keyword>
<keyword id="KW-0699">rRNA-binding</keyword>
<dbReference type="EMBL" id="AM946015">
    <property type="protein sequence ID" value="CAR43335.1"/>
    <property type="molecule type" value="Genomic_DNA"/>
</dbReference>
<dbReference type="RefSeq" id="WP_002983142.1">
    <property type="nucleotide sequence ID" value="NC_012004.1"/>
</dbReference>
<dbReference type="SMR" id="B9DVK2"/>
<dbReference type="STRING" id="218495.SUB1555"/>
<dbReference type="GeneID" id="93826879"/>
<dbReference type="KEGG" id="sub:SUB1555"/>
<dbReference type="eggNOG" id="COG0238">
    <property type="taxonomic scope" value="Bacteria"/>
</dbReference>
<dbReference type="HOGENOM" id="CLU_148710_2_2_9"/>
<dbReference type="OrthoDB" id="9812008at2"/>
<dbReference type="Proteomes" id="UP000000449">
    <property type="component" value="Chromosome"/>
</dbReference>
<dbReference type="GO" id="GO:0022627">
    <property type="term" value="C:cytosolic small ribosomal subunit"/>
    <property type="evidence" value="ECO:0007669"/>
    <property type="project" value="TreeGrafter"/>
</dbReference>
<dbReference type="GO" id="GO:0070181">
    <property type="term" value="F:small ribosomal subunit rRNA binding"/>
    <property type="evidence" value="ECO:0007669"/>
    <property type="project" value="TreeGrafter"/>
</dbReference>
<dbReference type="GO" id="GO:0003735">
    <property type="term" value="F:structural constituent of ribosome"/>
    <property type="evidence" value="ECO:0007669"/>
    <property type="project" value="InterPro"/>
</dbReference>
<dbReference type="GO" id="GO:0006412">
    <property type="term" value="P:translation"/>
    <property type="evidence" value="ECO:0007669"/>
    <property type="project" value="UniProtKB-UniRule"/>
</dbReference>
<dbReference type="FunFam" id="4.10.640.10:FF:000003">
    <property type="entry name" value="30S ribosomal protein S18"/>
    <property type="match status" value="1"/>
</dbReference>
<dbReference type="Gene3D" id="4.10.640.10">
    <property type="entry name" value="Ribosomal protein S18"/>
    <property type="match status" value="1"/>
</dbReference>
<dbReference type="HAMAP" id="MF_00270">
    <property type="entry name" value="Ribosomal_bS18"/>
    <property type="match status" value="1"/>
</dbReference>
<dbReference type="InterPro" id="IPR001648">
    <property type="entry name" value="Ribosomal_bS18"/>
</dbReference>
<dbReference type="InterPro" id="IPR018275">
    <property type="entry name" value="Ribosomal_bS18_CS"/>
</dbReference>
<dbReference type="InterPro" id="IPR036870">
    <property type="entry name" value="Ribosomal_bS18_sf"/>
</dbReference>
<dbReference type="NCBIfam" id="TIGR00165">
    <property type="entry name" value="S18"/>
    <property type="match status" value="1"/>
</dbReference>
<dbReference type="PANTHER" id="PTHR13479">
    <property type="entry name" value="30S RIBOSOMAL PROTEIN S18"/>
    <property type="match status" value="1"/>
</dbReference>
<dbReference type="PANTHER" id="PTHR13479:SF40">
    <property type="entry name" value="SMALL RIBOSOMAL SUBUNIT PROTEIN BS18M"/>
    <property type="match status" value="1"/>
</dbReference>
<dbReference type="Pfam" id="PF01084">
    <property type="entry name" value="Ribosomal_S18"/>
    <property type="match status" value="1"/>
</dbReference>
<dbReference type="PRINTS" id="PR00974">
    <property type="entry name" value="RIBOSOMALS18"/>
</dbReference>
<dbReference type="SUPFAM" id="SSF46911">
    <property type="entry name" value="Ribosomal protein S18"/>
    <property type="match status" value="1"/>
</dbReference>
<dbReference type="PROSITE" id="PS00057">
    <property type="entry name" value="RIBOSOMAL_S18"/>
    <property type="match status" value="1"/>
</dbReference>